<sequence length="118" mass="13438">MARVKRGVIARARHKKILKQAKGYYGARSRVYRVAFQAVIKAGQYAYRDRRQRKRQFRQLWIARINAAARVNGLSYSKFINGLKKASIEIDRKILADIAVFDKVAFGALVEKAKAALA</sequence>
<organism>
    <name type="scientific">Serratia proteamaculans (strain 568)</name>
    <dbReference type="NCBI Taxonomy" id="399741"/>
    <lineage>
        <taxon>Bacteria</taxon>
        <taxon>Pseudomonadati</taxon>
        <taxon>Pseudomonadota</taxon>
        <taxon>Gammaproteobacteria</taxon>
        <taxon>Enterobacterales</taxon>
        <taxon>Yersiniaceae</taxon>
        <taxon>Serratia</taxon>
    </lineage>
</organism>
<dbReference type="EMBL" id="CP000826">
    <property type="protein sequence ID" value="ABV41248.1"/>
    <property type="molecule type" value="Genomic_DNA"/>
</dbReference>
<dbReference type="SMR" id="A8GDQ8"/>
<dbReference type="STRING" id="399741.Spro_2147"/>
<dbReference type="KEGG" id="spe:Spro_2147"/>
<dbReference type="eggNOG" id="COG0292">
    <property type="taxonomic scope" value="Bacteria"/>
</dbReference>
<dbReference type="HOGENOM" id="CLU_123265_0_1_6"/>
<dbReference type="OrthoDB" id="9808966at2"/>
<dbReference type="GO" id="GO:1990904">
    <property type="term" value="C:ribonucleoprotein complex"/>
    <property type="evidence" value="ECO:0007669"/>
    <property type="project" value="UniProtKB-KW"/>
</dbReference>
<dbReference type="GO" id="GO:0005840">
    <property type="term" value="C:ribosome"/>
    <property type="evidence" value="ECO:0007669"/>
    <property type="project" value="UniProtKB-KW"/>
</dbReference>
<dbReference type="GO" id="GO:0019843">
    <property type="term" value="F:rRNA binding"/>
    <property type="evidence" value="ECO:0007669"/>
    <property type="project" value="UniProtKB-UniRule"/>
</dbReference>
<dbReference type="GO" id="GO:0003735">
    <property type="term" value="F:structural constituent of ribosome"/>
    <property type="evidence" value="ECO:0007669"/>
    <property type="project" value="InterPro"/>
</dbReference>
<dbReference type="GO" id="GO:0000027">
    <property type="term" value="P:ribosomal large subunit assembly"/>
    <property type="evidence" value="ECO:0007669"/>
    <property type="project" value="UniProtKB-UniRule"/>
</dbReference>
<dbReference type="GO" id="GO:0006412">
    <property type="term" value="P:translation"/>
    <property type="evidence" value="ECO:0007669"/>
    <property type="project" value="InterPro"/>
</dbReference>
<dbReference type="CDD" id="cd07026">
    <property type="entry name" value="Ribosomal_L20"/>
    <property type="match status" value="1"/>
</dbReference>
<dbReference type="FunFam" id="1.10.1900.20:FF:000001">
    <property type="entry name" value="50S ribosomal protein L20"/>
    <property type="match status" value="1"/>
</dbReference>
<dbReference type="Gene3D" id="6.10.160.10">
    <property type="match status" value="1"/>
</dbReference>
<dbReference type="Gene3D" id="1.10.1900.20">
    <property type="entry name" value="Ribosomal protein L20"/>
    <property type="match status" value="1"/>
</dbReference>
<dbReference type="HAMAP" id="MF_00382">
    <property type="entry name" value="Ribosomal_bL20"/>
    <property type="match status" value="1"/>
</dbReference>
<dbReference type="InterPro" id="IPR005813">
    <property type="entry name" value="Ribosomal_bL20"/>
</dbReference>
<dbReference type="InterPro" id="IPR049946">
    <property type="entry name" value="RIBOSOMAL_L20_CS"/>
</dbReference>
<dbReference type="InterPro" id="IPR035566">
    <property type="entry name" value="Ribosomal_protein_bL20_C"/>
</dbReference>
<dbReference type="NCBIfam" id="TIGR01032">
    <property type="entry name" value="rplT_bact"/>
    <property type="match status" value="1"/>
</dbReference>
<dbReference type="PANTHER" id="PTHR10986">
    <property type="entry name" value="39S RIBOSOMAL PROTEIN L20"/>
    <property type="match status" value="1"/>
</dbReference>
<dbReference type="Pfam" id="PF00453">
    <property type="entry name" value="Ribosomal_L20"/>
    <property type="match status" value="1"/>
</dbReference>
<dbReference type="PRINTS" id="PR00062">
    <property type="entry name" value="RIBOSOMALL20"/>
</dbReference>
<dbReference type="SUPFAM" id="SSF74731">
    <property type="entry name" value="Ribosomal protein L20"/>
    <property type="match status" value="1"/>
</dbReference>
<dbReference type="PROSITE" id="PS00937">
    <property type="entry name" value="RIBOSOMAL_L20"/>
    <property type="match status" value="1"/>
</dbReference>
<name>RL20_SERP5</name>
<feature type="chain" id="PRO_1000060692" description="Large ribosomal subunit protein bL20">
    <location>
        <begin position="1"/>
        <end position="118"/>
    </location>
</feature>
<accession>A8GDQ8</accession>
<keyword id="KW-0687">Ribonucleoprotein</keyword>
<keyword id="KW-0689">Ribosomal protein</keyword>
<keyword id="KW-0694">RNA-binding</keyword>
<keyword id="KW-0699">rRNA-binding</keyword>
<evidence type="ECO:0000255" key="1">
    <source>
        <dbReference type="HAMAP-Rule" id="MF_00382"/>
    </source>
</evidence>
<evidence type="ECO:0000305" key="2"/>
<proteinExistence type="inferred from homology"/>
<reference key="1">
    <citation type="submission" date="2007-09" db="EMBL/GenBank/DDBJ databases">
        <title>Complete sequence of chromosome of Serratia proteamaculans 568.</title>
        <authorList>
            <consortium name="US DOE Joint Genome Institute"/>
            <person name="Copeland A."/>
            <person name="Lucas S."/>
            <person name="Lapidus A."/>
            <person name="Barry K."/>
            <person name="Glavina del Rio T."/>
            <person name="Dalin E."/>
            <person name="Tice H."/>
            <person name="Pitluck S."/>
            <person name="Chain P."/>
            <person name="Malfatti S."/>
            <person name="Shin M."/>
            <person name="Vergez L."/>
            <person name="Schmutz J."/>
            <person name="Larimer F."/>
            <person name="Land M."/>
            <person name="Hauser L."/>
            <person name="Kyrpides N."/>
            <person name="Kim E."/>
            <person name="Taghavi S."/>
            <person name="Newman L."/>
            <person name="Vangronsveld J."/>
            <person name="van der Lelie D."/>
            <person name="Richardson P."/>
        </authorList>
    </citation>
    <scope>NUCLEOTIDE SEQUENCE [LARGE SCALE GENOMIC DNA]</scope>
    <source>
        <strain>568</strain>
    </source>
</reference>
<gene>
    <name evidence="1" type="primary">rplT</name>
    <name type="ordered locus">Spro_2147</name>
</gene>
<protein>
    <recommendedName>
        <fullName evidence="1">Large ribosomal subunit protein bL20</fullName>
    </recommendedName>
    <alternativeName>
        <fullName evidence="2">50S ribosomal protein L20</fullName>
    </alternativeName>
</protein>
<comment type="function">
    <text evidence="1">Binds directly to 23S ribosomal RNA and is necessary for the in vitro assembly process of the 50S ribosomal subunit. It is not involved in the protein synthesizing functions of that subunit.</text>
</comment>
<comment type="similarity">
    <text evidence="1">Belongs to the bacterial ribosomal protein bL20 family.</text>
</comment>